<organism>
    <name type="scientific">Ectopseudomonas mendocina (strain ymp)</name>
    <name type="common">Pseudomonas mendocina</name>
    <dbReference type="NCBI Taxonomy" id="399739"/>
    <lineage>
        <taxon>Bacteria</taxon>
        <taxon>Pseudomonadati</taxon>
        <taxon>Pseudomonadota</taxon>
        <taxon>Gammaproteobacteria</taxon>
        <taxon>Pseudomonadales</taxon>
        <taxon>Pseudomonadaceae</taxon>
        <taxon>Ectopseudomonas</taxon>
    </lineage>
</organism>
<gene>
    <name evidence="1" type="primary">ureG</name>
    <name type="ordered locus">Pmen_0664</name>
</gene>
<reference key="1">
    <citation type="submission" date="2007-04" db="EMBL/GenBank/DDBJ databases">
        <title>Complete sequence of Pseudomonas mendocina ymp.</title>
        <authorList>
            <consortium name="US DOE Joint Genome Institute"/>
            <person name="Copeland A."/>
            <person name="Lucas S."/>
            <person name="Lapidus A."/>
            <person name="Barry K."/>
            <person name="Glavina del Rio T."/>
            <person name="Dalin E."/>
            <person name="Tice H."/>
            <person name="Pitluck S."/>
            <person name="Kiss H."/>
            <person name="Brettin T."/>
            <person name="Detter J.C."/>
            <person name="Bruce D."/>
            <person name="Han C."/>
            <person name="Schmutz J."/>
            <person name="Larimer F."/>
            <person name="Land M."/>
            <person name="Hauser L."/>
            <person name="Kyrpides N."/>
            <person name="Mikhailova N."/>
            <person name="Hersman L."/>
            <person name="Dubois J."/>
            <person name="Maurice P."/>
            <person name="Richardson P."/>
        </authorList>
    </citation>
    <scope>NUCLEOTIDE SEQUENCE [LARGE SCALE GENOMIC DNA]</scope>
    <source>
        <strain>ymp</strain>
    </source>
</reference>
<comment type="function">
    <text evidence="1">Facilitates the functional incorporation of the urease nickel metallocenter. This process requires GTP hydrolysis, probably effectuated by UreG.</text>
</comment>
<comment type="subunit">
    <text evidence="1">Homodimer. UreD, UreF and UreG form a complex that acts as a GTP-hydrolysis-dependent molecular chaperone, activating the urease apoprotein by helping to assemble the nickel containing metallocenter of UreC. The UreE protein probably delivers the nickel.</text>
</comment>
<comment type="subcellular location">
    <subcellularLocation>
        <location evidence="1">Cytoplasm</location>
    </subcellularLocation>
</comment>
<comment type="similarity">
    <text evidence="1">Belongs to the SIMIBI class G3E GTPase family. UreG subfamily.</text>
</comment>
<protein>
    <recommendedName>
        <fullName evidence="1">Urease accessory protein UreG</fullName>
    </recommendedName>
</protein>
<accession>A4XQ16</accession>
<sequence>MNSQPLRVGIGGPVGSGKTALTLALCRALRERYNIAVVTNDIYTQEDAQFLVRNEALEPERIIGVETGGCPHTAIREDASINLEAVEQLNRRFPGLDLIIVESGGDNLSATFSPELSDLTLYVIDVSAGDKLPRKGGPGICKSDLLVINKVDLAPMVGASLEVMERDTLKMRGDKPFVFSNQKIGQGLDEIIAFIERQGMLTAA</sequence>
<dbReference type="EMBL" id="CP000680">
    <property type="protein sequence ID" value="ABP83432.1"/>
    <property type="molecule type" value="Genomic_DNA"/>
</dbReference>
<dbReference type="SMR" id="A4XQ16"/>
<dbReference type="STRING" id="399739.Pmen_0664"/>
<dbReference type="KEGG" id="pmy:Pmen_0664"/>
<dbReference type="eggNOG" id="COG0378">
    <property type="taxonomic scope" value="Bacteria"/>
</dbReference>
<dbReference type="HOGENOM" id="CLU_072144_1_0_6"/>
<dbReference type="OrthoDB" id="9802035at2"/>
<dbReference type="GO" id="GO:0005737">
    <property type="term" value="C:cytoplasm"/>
    <property type="evidence" value="ECO:0007669"/>
    <property type="project" value="UniProtKB-SubCell"/>
</dbReference>
<dbReference type="GO" id="GO:0005525">
    <property type="term" value="F:GTP binding"/>
    <property type="evidence" value="ECO:0007669"/>
    <property type="project" value="UniProtKB-KW"/>
</dbReference>
<dbReference type="GO" id="GO:0003924">
    <property type="term" value="F:GTPase activity"/>
    <property type="evidence" value="ECO:0007669"/>
    <property type="project" value="InterPro"/>
</dbReference>
<dbReference type="GO" id="GO:0016151">
    <property type="term" value="F:nickel cation binding"/>
    <property type="evidence" value="ECO:0007669"/>
    <property type="project" value="UniProtKB-UniRule"/>
</dbReference>
<dbReference type="GO" id="GO:0043419">
    <property type="term" value="P:urea catabolic process"/>
    <property type="evidence" value="ECO:0007669"/>
    <property type="project" value="InterPro"/>
</dbReference>
<dbReference type="CDD" id="cd05540">
    <property type="entry name" value="UreG"/>
    <property type="match status" value="1"/>
</dbReference>
<dbReference type="FunFam" id="3.40.50.300:FF:000208">
    <property type="entry name" value="Urease accessory protein UreG"/>
    <property type="match status" value="1"/>
</dbReference>
<dbReference type="Gene3D" id="3.40.50.300">
    <property type="entry name" value="P-loop containing nucleotide triphosphate hydrolases"/>
    <property type="match status" value="1"/>
</dbReference>
<dbReference type="HAMAP" id="MF_01389">
    <property type="entry name" value="UreG"/>
    <property type="match status" value="1"/>
</dbReference>
<dbReference type="InterPro" id="IPR003495">
    <property type="entry name" value="CobW/HypB/UreG_nucleotide-bd"/>
</dbReference>
<dbReference type="InterPro" id="IPR027417">
    <property type="entry name" value="P-loop_NTPase"/>
</dbReference>
<dbReference type="InterPro" id="IPR004400">
    <property type="entry name" value="UreG"/>
</dbReference>
<dbReference type="NCBIfam" id="TIGR00101">
    <property type="entry name" value="ureG"/>
    <property type="match status" value="1"/>
</dbReference>
<dbReference type="PANTHER" id="PTHR31715">
    <property type="entry name" value="UREASE ACCESSORY PROTEIN G"/>
    <property type="match status" value="1"/>
</dbReference>
<dbReference type="PANTHER" id="PTHR31715:SF0">
    <property type="entry name" value="UREASE ACCESSORY PROTEIN G"/>
    <property type="match status" value="1"/>
</dbReference>
<dbReference type="Pfam" id="PF02492">
    <property type="entry name" value="cobW"/>
    <property type="match status" value="1"/>
</dbReference>
<dbReference type="PIRSF" id="PIRSF005624">
    <property type="entry name" value="Ni-bind_GTPase"/>
    <property type="match status" value="1"/>
</dbReference>
<dbReference type="SUPFAM" id="SSF52540">
    <property type="entry name" value="P-loop containing nucleoside triphosphate hydrolases"/>
    <property type="match status" value="1"/>
</dbReference>
<proteinExistence type="inferred from homology"/>
<keyword id="KW-0143">Chaperone</keyword>
<keyword id="KW-0963">Cytoplasm</keyword>
<keyword id="KW-0342">GTP-binding</keyword>
<keyword id="KW-0996">Nickel insertion</keyword>
<keyword id="KW-0547">Nucleotide-binding</keyword>
<evidence type="ECO:0000255" key="1">
    <source>
        <dbReference type="HAMAP-Rule" id="MF_01389"/>
    </source>
</evidence>
<name>UREG_ECTM1</name>
<feature type="chain" id="PRO_1000145206" description="Urease accessory protein UreG">
    <location>
        <begin position="1"/>
        <end position="204"/>
    </location>
</feature>
<feature type="binding site" evidence="1">
    <location>
        <begin position="12"/>
        <end position="19"/>
    </location>
    <ligand>
        <name>GTP</name>
        <dbReference type="ChEBI" id="CHEBI:37565"/>
    </ligand>
</feature>